<reference key="1">
    <citation type="submission" date="1998-07" db="EMBL/GenBank/DDBJ databases">
        <title>A C. elegans gene encoding a homologue of the ER lumen protein receptor ERD2.</title>
        <authorList>
            <person name="Banfield D.K."/>
            <person name="Pelham H.R.B."/>
        </authorList>
    </citation>
    <scope>NUCLEOTIDE SEQUENCE [GENOMIC DNA]</scope>
</reference>
<reference key="2">
    <citation type="journal article" date="1998" name="Science">
        <title>Genome sequence of the nematode C. elegans: a platform for investigating biology.</title>
        <authorList>
            <consortium name="The C. elegans sequencing consortium"/>
        </authorList>
    </citation>
    <scope>NUCLEOTIDE SEQUENCE [LARGE SCALE GENOMIC DNA]</scope>
    <source>
        <strain>Bristol N2</strain>
    </source>
</reference>
<gene>
    <name evidence="4" type="primary">erd-2.1</name>
    <name evidence="4" type="synonym">erd-2</name>
    <name evidence="4" type="ORF">F09B9.3</name>
</gene>
<feature type="chain" id="PRO_0000194161" description="ER lumen protein-retaining receptor erd-2.1">
    <location>
        <begin position="1"/>
        <end position="213"/>
    </location>
</feature>
<feature type="topological domain" description="Lumenal" evidence="2">
    <location>
        <begin position="1"/>
        <end position="2"/>
    </location>
</feature>
<feature type="transmembrane region" description="Helical" evidence="2">
    <location>
        <begin position="3"/>
        <end position="21"/>
    </location>
</feature>
<feature type="topological domain" description="Cytoplasmic" evidence="2">
    <location>
        <begin position="22"/>
        <end position="35"/>
    </location>
</feature>
<feature type="transmembrane region" description="Helical" evidence="2">
    <location>
        <begin position="36"/>
        <end position="53"/>
    </location>
</feature>
<feature type="topological domain" description="Lumenal" evidence="2">
    <location>
        <begin position="54"/>
        <end position="61"/>
    </location>
</feature>
<feature type="transmembrane region" description="Helical" evidence="2">
    <location>
        <begin position="62"/>
        <end position="80"/>
    </location>
</feature>
<feature type="topological domain" description="Cytoplasmic" evidence="2">
    <location>
        <begin position="81"/>
        <end position="96"/>
    </location>
</feature>
<feature type="transmembrane region" description="Helical" evidence="2">
    <location>
        <begin position="97"/>
        <end position="110"/>
    </location>
</feature>
<feature type="topological domain" description="Lumenal" evidence="2">
    <location>
        <begin position="111"/>
        <end position="117"/>
    </location>
</feature>
<feature type="transmembrane region" description="Helical" evidence="2">
    <location>
        <begin position="118"/>
        <end position="137"/>
    </location>
</feature>
<feature type="topological domain" description="Cytoplasmic" evidence="2">
    <location>
        <begin position="138"/>
        <end position="149"/>
    </location>
</feature>
<feature type="transmembrane region" description="Helical" evidence="2">
    <location>
        <begin position="150"/>
        <end position="168"/>
    </location>
</feature>
<feature type="topological domain" description="Lumenal" evidence="2">
    <location>
        <begin position="169"/>
        <end position="178"/>
    </location>
</feature>
<feature type="transmembrane region" description="Helical" evidence="2">
    <location>
        <begin position="179"/>
        <end position="199"/>
    </location>
</feature>
<feature type="topological domain" description="Cytoplasmic" evidence="2">
    <location>
        <begin position="200"/>
        <end position="213"/>
    </location>
</feature>
<organism>
    <name type="scientific">Caenorhabditis elegans</name>
    <dbReference type="NCBI Taxonomy" id="6239"/>
    <lineage>
        <taxon>Eukaryota</taxon>
        <taxon>Metazoa</taxon>
        <taxon>Ecdysozoa</taxon>
        <taxon>Nematoda</taxon>
        <taxon>Chromadorea</taxon>
        <taxon>Rhabditida</taxon>
        <taxon>Rhabditina</taxon>
        <taxon>Rhabditomorpha</taxon>
        <taxon>Rhabditoidea</taxon>
        <taxon>Rhabditidae</taxon>
        <taxon>Peloderinae</taxon>
        <taxon>Caenorhabditis</taxon>
    </lineage>
</organism>
<sequence length="213" mass="25060">MNLFRFTADVAHAIAIVVLLLKIWKSRSCEGISGRSQLLFALVFVTRYLDLFTNFFSFYNTAMKIFYLVASFGTVYLMWAKFKATYDRNNDSFRIEFLVIPSMILALLINHEFIFMEVMWTFSIYLEAVAIMPQLFMLSRTGNAETITAHYLFALGSYRFLYILNWVYRYYTESFFDPISVVAGIVQTVLYADFFYLYITRVIQSNRQFEMSA</sequence>
<evidence type="ECO:0000250" key="1"/>
<evidence type="ECO:0000255" key="2"/>
<evidence type="ECO:0000305" key="3"/>
<evidence type="ECO:0000312" key="4">
    <source>
        <dbReference type="WormBase" id="F09B9.3"/>
    </source>
</evidence>
<keyword id="KW-0256">Endoplasmic reticulum</keyword>
<keyword id="KW-0931">ER-Golgi transport</keyword>
<keyword id="KW-0472">Membrane</keyword>
<keyword id="KW-0653">Protein transport</keyword>
<keyword id="KW-0675">Receptor</keyword>
<keyword id="KW-1185">Reference proteome</keyword>
<keyword id="KW-0812">Transmembrane</keyword>
<keyword id="KW-1133">Transmembrane helix</keyword>
<keyword id="KW-0813">Transport</keyword>
<comment type="function">
    <text evidence="1">Required for the retention of luminal endoplasmic reticulum proteins. Determines the specificity of the luminal ER protein retention system. Also required for normal vesicular traffic through the Golgi (By similarity).</text>
</comment>
<comment type="subcellular location">
    <subcellularLocation>
        <location>Endoplasmic reticulum membrane</location>
        <topology>Multi-pass membrane protein</topology>
    </subcellularLocation>
</comment>
<comment type="similarity">
    <text evidence="3">Belongs to the ERD2 family.</text>
</comment>
<name>ERD21_CAEEL</name>
<protein>
    <recommendedName>
        <fullName evidence="3">ER lumen protein-retaining receptor erd-2.1</fullName>
    </recommendedName>
</protein>
<proteinExistence type="inferred from homology"/>
<accession>P48583</accession>
<accession>O76766</accession>
<dbReference type="EMBL" id="AF081125">
    <property type="protein sequence ID" value="AAC31954.1"/>
    <property type="molecule type" value="Genomic_DNA"/>
</dbReference>
<dbReference type="EMBL" id="BX284606">
    <property type="protein sequence ID" value="CAA90056.2"/>
    <property type="molecule type" value="Genomic_DNA"/>
</dbReference>
<dbReference type="PIR" id="C89623">
    <property type="entry name" value="C89623"/>
</dbReference>
<dbReference type="PIR" id="T20636">
    <property type="entry name" value="T20636"/>
</dbReference>
<dbReference type="RefSeq" id="NP_001366716.1">
    <property type="nucleotide sequence ID" value="NM_001381076.3"/>
</dbReference>
<dbReference type="RefSeq" id="NP_509703.1">
    <property type="nucleotide sequence ID" value="NM_077302.5"/>
</dbReference>
<dbReference type="SMR" id="P48583"/>
<dbReference type="FunCoup" id="P48583">
    <property type="interactions" value="1673"/>
</dbReference>
<dbReference type="STRING" id="6239.F09B9.3.1"/>
<dbReference type="TCDB" id="9.B.191.1.10">
    <property type="family name" value="the endoplasmic reticulum retention receptor (kdelr) family"/>
</dbReference>
<dbReference type="PaxDb" id="6239-F09B9.3"/>
<dbReference type="EnsemblMetazoa" id="F09B9.3.1">
    <property type="protein sequence ID" value="F09B9.3.1"/>
    <property type="gene ID" value="WBGene00001331"/>
</dbReference>
<dbReference type="GeneID" id="181228"/>
<dbReference type="UCSC" id="F09B9.3">
    <property type="organism name" value="c. elegans"/>
</dbReference>
<dbReference type="AGR" id="WB:WBGene00001331"/>
<dbReference type="WormBase" id="F09B9.3">
    <property type="protein sequence ID" value="CE23635"/>
    <property type="gene ID" value="WBGene00001331"/>
    <property type="gene designation" value="erd-2.1"/>
</dbReference>
<dbReference type="eggNOG" id="KOG3106">
    <property type="taxonomic scope" value="Eukaryota"/>
</dbReference>
<dbReference type="GeneTree" id="ENSGT00390000004010"/>
<dbReference type="HOGENOM" id="CLU_057784_0_0_1"/>
<dbReference type="InParanoid" id="P48583"/>
<dbReference type="OMA" id="WKSRSCE"/>
<dbReference type="OrthoDB" id="7694678at2759"/>
<dbReference type="PhylomeDB" id="P48583"/>
<dbReference type="Reactome" id="R-CEL-6807878">
    <property type="pathway name" value="COPI-mediated anterograde transport"/>
</dbReference>
<dbReference type="Reactome" id="R-CEL-6811434">
    <property type="pathway name" value="COPI-dependent Golgi-to-ER retrograde traffic"/>
</dbReference>
<dbReference type="PRO" id="PR:P48583"/>
<dbReference type="Proteomes" id="UP000001940">
    <property type="component" value="Chromosome X"/>
</dbReference>
<dbReference type="Bgee" id="WBGene00001331">
    <property type="expression patterns" value="Expressed in pharyngeal muscle cell (C elegans) and 4 other cell types or tissues"/>
</dbReference>
<dbReference type="GO" id="GO:0005801">
    <property type="term" value="C:cis-Golgi network"/>
    <property type="evidence" value="ECO:0000318"/>
    <property type="project" value="GO_Central"/>
</dbReference>
<dbReference type="GO" id="GO:0005783">
    <property type="term" value="C:endoplasmic reticulum"/>
    <property type="evidence" value="ECO:0000318"/>
    <property type="project" value="GO_Central"/>
</dbReference>
<dbReference type="GO" id="GO:0005789">
    <property type="term" value="C:endoplasmic reticulum membrane"/>
    <property type="evidence" value="ECO:0007669"/>
    <property type="project" value="UniProtKB-SubCell"/>
</dbReference>
<dbReference type="GO" id="GO:0046923">
    <property type="term" value="F:ER retention sequence binding"/>
    <property type="evidence" value="ECO:0000318"/>
    <property type="project" value="GO_Central"/>
</dbReference>
<dbReference type="GO" id="GO:0036498">
    <property type="term" value="P:IRE1-mediated unfolded protein response"/>
    <property type="evidence" value="ECO:0007007"/>
    <property type="project" value="WormBase"/>
</dbReference>
<dbReference type="GO" id="GO:0006621">
    <property type="term" value="P:protein retention in ER lumen"/>
    <property type="evidence" value="ECO:0000318"/>
    <property type="project" value="GO_Central"/>
</dbReference>
<dbReference type="GO" id="GO:0015031">
    <property type="term" value="P:protein transport"/>
    <property type="evidence" value="ECO:0007669"/>
    <property type="project" value="UniProtKB-KW"/>
</dbReference>
<dbReference type="GO" id="GO:0016192">
    <property type="term" value="P:vesicle-mediated transport"/>
    <property type="evidence" value="ECO:0007669"/>
    <property type="project" value="UniProtKB-KW"/>
</dbReference>
<dbReference type="InterPro" id="IPR000133">
    <property type="entry name" value="ER_ret_rcpt"/>
</dbReference>
<dbReference type="PANTHER" id="PTHR10585">
    <property type="entry name" value="ER LUMEN PROTEIN RETAINING RECEPTOR"/>
    <property type="match status" value="1"/>
</dbReference>
<dbReference type="Pfam" id="PF00810">
    <property type="entry name" value="ER_lumen_recept"/>
    <property type="match status" value="1"/>
</dbReference>
<dbReference type="PRINTS" id="PR00660">
    <property type="entry name" value="ERLUMENR"/>
</dbReference>
<dbReference type="PROSITE" id="PS00951">
    <property type="entry name" value="ER_LUMEN_RECEPTOR_1"/>
    <property type="match status" value="1"/>
</dbReference>
<dbReference type="PROSITE" id="PS00952">
    <property type="entry name" value="ER_LUMEN_RECEPTOR_2"/>
    <property type="match status" value="1"/>
</dbReference>